<organism>
    <name type="scientific">Methanocaldococcus jannaschii (strain ATCC 43067 / DSM 2661 / JAL-1 / JCM 10045 / NBRC 100440)</name>
    <name type="common">Methanococcus jannaschii</name>
    <dbReference type="NCBI Taxonomy" id="243232"/>
    <lineage>
        <taxon>Archaea</taxon>
        <taxon>Methanobacteriati</taxon>
        <taxon>Methanobacteriota</taxon>
        <taxon>Methanomada group</taxon>
        <taxon>Methanococci</taxon>
        <taxon>Methanococcales</taxon>
        <taxon>Methanocaldococcaceae</taxon>
        <taxon>Methanocaldococcus</taxon>
    </lineage>
</organism>
<name>Y989_METJA</name>
<reference key="1">
    <citation type="journal article" date="1996" name="Science">
        <title>Complete genome sequence of the methanogenic archaeon, Methanococcus jannaschii.</title>
        <authorList>
            <person name="Bult C.J."/>
            <person name="White O."/>
            <person name="Olsen G.J."/>
            <person name="Zhou L."/>
            <person name="Fleischmann R.D."/>
            <person name="Sutton G.G."/>
            <person name="Blake J.A."/>
            <person name="FitzGerald L.M."/>
            <person name="Clayton R.A."/>
            <person name="Gocayne J.D."/>
            <person name="Kerlavage A.R."/>
            <person name="Dougherty B.A."/>
            <person name="Tomb J.-F."/>
            <person name="Adams M.D."/>
            <person name="Reich C.I."/>
            <person name="Overbeek R."/>
            <person name="Kirkness E.F."/>
            <person name="Weinstock K.G."/>
            <person name="Merrick J.M."/>
            <person name="Glodek A."/>
            <person name="Scott J.L."/>
            <person name="Geoghagen N.S.M."/>
            <person name="Weidman J.F."/>
            <person name="Fuhrmann J.L."/>
            <person name="Nguyen D."/>
            <person name="Utterback T.R."/>
            <person name="Kelley J.M."/>
            <person name="Peterson J.D."/>
            <person name="Sadow P.W."/>
            <person name="Hanna M.C."/>
            <person name="Cotton M.D."/>
            <person name="Roberts K.M."/>
            <person name="Hurst M.A."/>
            <person name="Kaine B.P."/>
            <person name="Borodovsky M."/>
            <person name="Klenk H.-P."/>
            <person name="Fraser C.M."/>
            <person name="Smith H.O."/>
            <person name="Woese C.R."/>
            <person name="Venter J.C."/>
        </authorList>
    </citation>
    <scope>NUCLEOTIDE SEQUENCE [LARGE SCALE GENOMIC DNA]</scope>
    <source>
        <strain>ATCC 43067 / DSM 2661 / JAL-1 / JCM 10045 / NBRC 100440</strain>
    </source>
</reference>
<evidence type="ECO:0000305" key="1"/>
<comment type="similarity">
    <text evidence="1">To M.kandleri MK0008.</text>
</comment>
<feature type="chain" id="PRO_0000107132" description="Uncharacterized protein MJ0989">
    <location>
        <begin position="1"/>
        <end position="114"/>
    </location>
</feature>
<protein>
    <recommendedName>
        <fullName>Uncharacterized protein MJ0989</fullName>
    </recommendedName>
</protein>
<sequence>MKFTVIITEAPYGKERAYSALRFALTALLEGIEVNIFLLENGVYVAKKEQNPSEVPNYLELLKNAIELGAVVKVCGPCCKARGLKEEDLIEGAKLATMHDLIAFVKESDNVVTF</sequence>
<dbReference type="EMBL" id="L77117">
    <property type="protein sequence ID" value="AAB98991.1"/>
    <property type="molecule type" value="Genomic_DNA"/>
</dbReference>
<dbReference type="PIR" id="E64423">
    <property type="entry name" value="E64423"/>
</dbReference>
<dbReference type="RefSeq" id="WP_010870503.1">
    <property type="nucleotide sequence ID" value="NC_000909.1"/>
</dbReference>
<dbReference type="SMR" id="Q58396"/>
<dbReference type="STRING" id="243232.MJ_0989"/>
<dbReference type="PaxDb" id="243232-MJ_0989"/>
<dbReference type="EnsemblBacteria" id="AAB98991">
    <property type="protein sequence ID" value="AAB98991"/>
    <property type="gene ID" value="MJ_0989"/>
</dbReference>
<dbReference type="GeneID" id="8805478"/>
<dbReference type="KEGG" id="mja:MJ_0989"/>
<dbReference type="eggNOG" id="arCOG02068">
    <property type="taxonomic scope" value="Archaea"/>
</dbReference>
<dbReference type="HOGENOM" id="CLU_151801_2_0_2"/>
<dbReference type="InParanoid" id="Q58396"/>
<dbReference type="OrthoDB" id="216309at2157"/>
<dbReference type="PhylomeDB" id="Q58396"/>
<dbReference type="Proteomes" id="UP000000805">
    <property type="component" value="Chromosome"/>
</dbReference>
<dbReference type="GO" id="GO:0005829">
    <property type="term" value="C:cytosol"/>
    <property type="evidence" value="ECO:0000318"/>
    <property type="project" value="GO_Central"/>
</dbReference>
<dbReference type="Gene3D" id="3.40.1260.10">
    <property type="entry name" value="DsrEFH-like"/>
    <property type="match status" value="1"/>
</dbReference>
<dbReference type="InterPro" id="IPR027396">
    <property type="entry name" value="DsrEFH-like"/>
</dbReference>
<dbReference type="InterPro" id="IPR003787">
    <property type="entry name" value="Sulphur_relay_DsrE/F-like"/>
</dbReference>
<dbReference type="PANTHER" id="PTHR34874">
    <property type="entry name" value="PROTEIN YCHN"/>
    <property type="match status" value="1"/>
</dbReference>
<dbReference type="PANTHER" id="PTHR34874:SF1">
    <property type="entry name" value="PROTEIN YCHN"/>
    <property type="match status" value="1"/>
</dbReference>
<dbReference type="Pfam" id="PF02635">
    <property type="entry name" value="DsrE"/>
    <property type="match status" value="1"/>
</dbReference>
<dbReference type="SUPFAM" id="SSF75169">
    <property type="entry name" value="DsrEFH-like"/>
    <property type="match status" value="1"/>
</dbReference>
<proteinExistence type="predicted"/>
<accession>Q58396</accession>
<gene>
    <name type="ordered locus">MJ0989</name>
</gene>
<keyword id="KW-1185">Reference proteome</keyword>